<feature type="chain" id="PRO_0000140094" description="GMP synthase [glutamine-hydrolyzing] 1">
    <location>
        <begin position="1"/>
        <end position="507"/>
    </location>
</feature>
<feature type="domain" description="Glutamine amidotransferase type-1">
    <location>
        <begin position="4"/>
        <end position="193"/>
    </location>
</feature>
<feature type="domain" description="GMPS ATP-PPase">
    <location>
        <begin position="194"/>
        <end position="382"/>
    </location>
</feature>
<feature type="active site" description="Nucleophile" evidence="1">
    <location>
        <position position="79"/>
    </location>
</feature>
<feature type="active site" evidence="1">
    <location>
        <position position="167"/>
    </location>
</feature>
<feature type="active site" evidence="1">
    <location>
        <position position="169"/>
    </location>
</feature>
<feature type="binding site" evidence="1">
    <location>
        <begin position="221"/>
        <end position="227"/>
    </location>
    <ligand>
        <name>ATP</name>
        <dbReference type="ChEBI" id="CHEBI:30616"/>
    </ligand>
</feature>
<reference key="1">
    <citation type="journal article" date="2003" name="Science">
        <title>A genomic view of the human-Bacteroides thetaiotaomicron symbiosis.</title>
        <authorList>
            <person name="Xu J."/>
            <person name="Bjursell M.K."/>
            <person name="Himrod J."/>
            <person name="Deng S."/>
            <person name="Carmichael L.K."/>
            <person name="Chiang H.C."/>
            <person name="Hooper L.V."/>
            <person name="Gordon J.I."/>
        </authorList>
    </citation>
    <scope>NUCLEOTIDE SEQUENCE [LARGE SCALE GENOMIC DNA]</scope>
    <source>
        <strain>ATCC 29148 / DSM 2079 / JCM 5827 / CCUG 10774 / NCTC 10582 / VPI-5482 / E50</strain>
    </source>
</reference>
<gene>
    <name type="primary">guaA1</name>
    <name type="ordered locus">BT_4265</name>
</gene>
<organism>
    <name type="scientific">Bacteroides thetaiotaomicron (strain ATCC 29148 / DSM 2079 / JCM 5827 / CCUG 10774 / NCTC 10582 / VPI-5482 / E50)</name>
    <dbReference type="NCBI Taxonomy" id="226186"/>
    <lineage>
        <taxon>Bacteria</taxon>
        <taxon>Pseudomonadati</taxon>
        <taxon>Bacteroidota</taxon>
        <taxon>Bacteroidia</taxon>
        <taxon>Bacteroidales</taxon>
        <taxon>Bacteroidaceae</taxon>
        <taxon>Bacteroides</taxon>
    </lineage>
</organism>
<proteinExistence type="inferred from homology"/>
<name>GUAA1_BACTN</name>
<evidence type="ECO:0000250" key="1"/>
<comment type="function">
    <text evidence="1">Catalyzes the synthesis of GMP from XMP.</text>
</comment>
<comment type="catalytic activity">
    <reaction>
        <text>XMP + L-glutamine + ATP + H2O = GMP + L-glutamate + AMP + diphosphate + 2 H(+)</text>
        <dbReference type="Rhea" id="RHEA:11680"/>
        <dbReference type="ChEBI" id="CHEBI:15377"/>
        <dbReference type="ChEBI" id="CHEBI:15378"/>
        <dbReference type="ChEBI" id="CHEBI:29985"/>
        <dbReference type="ChEBI" id="CHEBI:30616"/>
        <dbReference type="ChEBI" id="CHEBI:33019"/>
        <dbReference type="ChEBI" id="CHEBI:57464"/>
        <dbReference type="ChEBI" id="CHEBI:58115"/>
        <dbReference type="ChEBI" id="CHEBI:58359"/>
        <dbReference type="ChEBI" id="CHEBI:456215"/>
        <dbReference type="EC" id="6.3.5.2"/>
    </reaction>
</comment>
<comment type="pathway">
    <text>Purine metabolism; GMP biosynthesis; GMP from XMP (L-Gln route): step 1/1.</text>
</comment>
<comment type="subunit">
    <text evidence="1">Homodimer.</text>
</comment>
<keyword id="KW-0067">ATP-binding</keyword>
<keyword id="KW-0315">Glutamine amidotransferase</keyword>
<keyword id="KW-0332">GMP biosynthesis</keyword>
<keyword id="KW-0436">Ligase</keyword>
<keyword id="KW-0547">Nucleotide-binding</keyword>
<keyword id="KW-0658">Purine biosynthesis</keyword>
<keyword id="KW-1185">Reference proteome</keyword>
<protein>
    <recommendedName>
        <fullName>GMP synthase [glutamine-hydrolyzing] 1</fullName>
        <ecNumber>6.3.5.2</ecNumber>
    </recommendedName>
    <alternativeName>
        <fullName>GMP synthetase 1</fullName>
    </alternativeName>
    <alternativeName>
        <fullName>Glutamine amidotransferase 1</fullName>
    </alternativeName>
</protein>
<accession>Q89ZV6</accession>
<dbReference type="EC" id="6.3.5.2"/>
<dbReference type="EMBL" id="AE015928">
    <property type="protein sequence ID" value="AAO79370.1"/>
    <property type="molecule type" value="Genomic_DNA"/>
</dbReference>
<dbReference type="RefSeq" id="NP_813176.1">
    <property type="nucleotide sequence ID" value="NC_004663.1"/>
</dbReference>
<dbReference type="SMR" id="Q89ZV6"/>
<dbReference type="FunCoup" id="Q89ZV6">
    <property type="interactions" value="548"/>
</dbReference>
<dbReference type="STRING" id="226186.BT_4265"/>
<dbReference type="MEROPS" id="C26.957"/>
<dbReference type="PaxDb" id="226186-BT_4265"/>
<dbReference type="EnsemblBacteria" id="AAO79370">
    <property type="protein sequence ID" value="AAO79370"/>
    <property type="gene ID" value="BT_4265"/>
</dbReference>
<dbReference type="KEGG" id="bth:BT_4265"/>
<dbReference type="PATRIC" id="fig|226186.12.peg.4338"/>
<dbReference type="eggNOG" id="COG0518">
    <property type="taxonomic scope" value="Bacteria"/>
</dbReference>
<dbReference type="eggNOG" id="COG0519">
    <property type="taxonomic scope" value="Bacteria"/>
</dbReference>
<dbReference type="HOGENOM" id="CLU_014340_0_5_10"/>
<dbReference type="InParanoid" id="Q89ZV6"/>
<dbReference type="OrthoDB" id="9802219at2"/>
<dbReference type="UniPathway" id="UPA00189">
    <property type="reaction ID" value="UER00296"/>
</dbReference>
<dbReference type="Proteomes" id="UP000001414">
    <property type="component" value="Chromosome"/>
</dbReference>
<dbReference type="GO" id="GO:0005829">
    <property type="term" value="C:cytosol"/>
    <property type="evidence" value="ECO:0000318"/>
    <property type="project" value="GO_Central"/>
</dbReference>
<dbReference type="GO" id="GO:0005524">
    <property type="term" value="F:ATP binding"/>
    <property type="evidence" value="ECO:0007669"/>
    <property type="project" value="UniProtKB-UniRule"/>
</dbReference>
<dbReference type="GO" id="GO:0003921">
    <property type="term" value="F:GMP synthase activity"/>
    <property type="evidence" value="ECO:0000318"/>
    <property type="project" value="GO_Central"/>
</dbReference>
<dbReference type="GO" id="GO:0006177">
    <property type="term" value="P:GMP biosynthetic process"/>
    <property type="evidence" value="ECO:0000318"/>
    <property type="project" value="GO_Central"/>
</dbReference>
<dbReference type="CDD" id="cd01742">
    <property type="entry name" value="GATase1_GMP_Synthase"/>
    <property type="match status" value="1"/>
</dbReference>
<dbReference type="CDD" id="cd01997">
    <property type="entry name" value="GMP_synthase_C"/>
    <property type="match status" value="1"/>
</dbReference>
<dbReference type="FunFam" id="3.30.300.10:FF:000002">
    <property type="entry name" value="GMP synthase [glutamine-hydrolyzing]"/>
    <property type="match status" value="1"/>
</dbReference>
<dbReference type="FunFam" id="3.40.50.620:FF:000001">
    <property type="entry name" value="GMP synthase [glutamine-hydrolyzing]"/>
    <property type="match status" value="1"/>
</dbReference>
<dbReference type="FunFam" id="3.40.50.880:FF:000001">
    <property type="entry name" value="GMP synthase [glutamine-hydrolyzing]"/>
    <property type="match status" value="1"/>
</dbReference>
<dbReference type="Gene3D" id="3.30.300.10">
    <property type="match status" value="1"/>
</dbReference>
<dbReference type="Gene3D" id="3.40.50.880">
    <property type="match status" value="1"/>
</dbReference>
<dbReference type="Gene3D" id="3.40.50.620">
    <property type="entry name" value="HUPs"/>
    <property type="match status" value="1"/>
</dbReference>
<dbReference type="HAMAP" id="MF_00344">
    <property type="entry name" value="GMP_synthase"/>
    <property type="match status" value="1"/>
</dbReference>
<dbReference type="InterPro" id="IPR029062">
    <property type="entry name" value="Class_I_gatase-like"/>
</dbReference>
<dbReference type="InterPro" id="IPR017926">
    <property type="entry name" value="GATASE"/>
</dbReference>
<dbReference type="InterPro" id="IPR001674">
    <property type="entry name" value="GMP_synth_C"/>
</dbReference>
<dbReference type="InterPro" id="IPR004739">
    <property type="entry name" value="GMP_synth_GATase"/>
</dbReference>
<dbReference type="InterPro" id="IPR022955">
    <property type="entry name" value="GMP_synthase"/>
</dbReference>
<dbReference type="InterPro" id="IPR025777">
    <property type="entry name" value="GMPS_ATP_PPase_dom"/>
</dbReference>
<dbReference type="InterPro" id="IPR022310">
    <property type="entry name" value="NAD/GMP_synthase"/>
</dbReference>
<dbReference type="InterPro" id="IPR014729">
    <property type="entry name" value="Rossmann-like_a/b/a_fold"/>
</dbReference>
<dbReference type="NCBIfam" id="TIGR00884">
    <property type="entry name" value="guaA_Cterm"/>
    <property type="match status" value="1"/>
</dbReference>
<dbReference type="NCBIfam" id="TIGR00888">
    <property type="entry name" value="guaA_Nterm"/>
    <property type="match status" value="1"/>
</dbReference>
<dbReference type="NCBIfam" id="NF000848">
    <property type="entry name" value="PRK00074.1"/>
    <property type="match status" value="1"/>
</dbReference>
<dbReference type="PANTHER" id="PTHR11922:SF2">
    <property type="entry name" value="GMP SYNTHASE [GLUTAMINE-HYDROLYZING]"/>
    <property type="match status" value="1"/>
</dbReference>
<dbReference type="PANTHER" id="PTHR11922">
    <property type="entry name" value="GMP SYNTHASE-RELATED"/>
    <property type="match status" value="1"/>
</dbReference>
<dbReference type="Pfam" id="PF00117">
    <property type="entry name" value="GATase"/>
    <property type="match status" value="1"/>
</dbReference>
<dbReference type="Pfam" id="PF00958">
    <property type="entry name" value="GMP_synt_C"/>
    <property type="match status" value="1"/>
</dbReference>
<dbReference type="Pfam" id="PF02540">
    <property type="entry name" value="NAD_synthase"/>
    <property type="match status" value="1"/>
</dbReference>
<dbReference type="PRINTS" id="PR00096">
    <property type="entry name" value="GATASE"/>
</dbReference>
<dbReference type="SUPFAM" id="SSF52402">
    <property type="entry name" value="Adenine nucleotide alpha hydrolases-like"/>
    <property type="match status" value="1"/>
</dbReference>
<dbReference type="SUPFAM" id="SSF52317">
    <property type="entry name" value="Class I glutamine amidotransferase-like"/>
    <property type="match status" value="1"/>
</dbReference>
<dbReference type="SUPFAM" id="SSF54810">
    <property type="entry name" value="GMP synthetase C-terminal dimerisation domain"/>
    <property type="match status" value="1"/>
</dbReference>
<dbReference type="PROSITE" id="PS51273">
    <property type="entry name" value="GATASE_TYPE_1"/>
    <property type="match status" value="1"/>
</dbReference>
<dbReference type="PROSITE" id="PS51553">
    <property type="entry name" value="GMPS_ATP_PPASE"/>
    <property type="match status" value="1"/>
</dbReference>
<sequence>MQEKIIILDFGSQTTQLIGRRVRELDTYCEIVPYNKFPKEDPTIKGVILSGSPFSVYDKDAFKVDLSEIRGKYPILGICYGAQFMAYTNNGKVEPAGTREYGRAHLTSFCKDNVLFKGVRENTQVWMSHGDTITAIPDNFKKIASTDKVDIAAYQVEGEKVWGVQFHPEVFHSEDGTQILRNFVVDVCGCKQDWSPASFIESTVAELKAQLGDDKVVLGLSGGVDSSVAAVLLNRAIGKNLTCIFVDHGMLRKNEFKNVMNDYECLGLNVIGVDASEKFFAELAGVTEPERKRKIIGKGFIDVFDVEAHKIKDVKWLAQGTIYPDCIESLSITGTVIKSHHNVGGLPEKMHLKLCEPLRLLFKDEVRRVGRELGMPEHLITRHPFPGPGLAVRILGDITREKVRILQDADDIYIQGLRDWGLYDQVWQAGVILLPVQSVGVMGDERTYERAVALRAVTSTDAMTADWAHLPYEFLGKISNDIINKVKGVNRVTYDISSKPPATIEWE</sequence>